<comment type="subunit">
    <text>Binds DNA specifically as homodimer or heterodimer with other PAR factors.</text>
</comment>
<comment type="interaction">
    <interactant intactId="EBI-2798854">
        <id>Q16534</id>
    </interactant>
    <interactant intactId="EBI-749503">
        <id>Q16520</id>
        <label>BATF</label>
    </interactant>
    <organismsDiffer>false</organismsDiffer>
    <experiments>2</experiments>
</comment>
<comment type="interaction">
    <interactant intactId="EBI-2798854">
        <id>Q16534</id>
    </interactant>
    <interactant intactId="EBI-10312707">
        <id>Q9NR55</id>
        <label>BATF3</label>
    </interactant>
    <organismsDiffer>false</organismsDiffer>
    <experiments>2</experiments>
</comment>
<comment type="interaction">
    <interactant intactId="EBI-2798854">
        <id>Q16534</id>
    </interactant>
    <interactant intactId="EBI-3908088">
        <id>Q10586</id>
        <label>DBP</label>
    </interactant>
    <organismsDiffer>false</organismsDiffer>
    <experiments>3</experiments>
</comment>
<comment type="interaction">
    <interactant intactId="EBI-2798854">
        <id>Q16534</id>
    </interactant>
    <interactant intactId="EBI-742651">
        <id>P35638</id>
        <label>DDIT3</label>
    </interactant>
    <organismsDiffer>false</organismsDiffer>
    <experiments>3</experiments>
</comment>
<comment type="subcellular location">
    <subcellularLocation>
        <location evidence="5">Nucleus</location>
    </subcellularLocation>
</comment>
<comment type="alternative products">
    <event type="alternative splicing"/>
    <isoform>
        <id>Q16534-1</id>
        <name>1</name>
        <sequence type="displayed"/>
    </isoform>
    <isoform>
        <id>Q16534-2</id>
        <name>2</name>
        <sequence type="described" ref="VSP_053852"/>
    </isoform>
</comment>
<comment type="tissue specificity">
    <text>Highly expressed in liver; lower levels in lung and kidney.</text>
</comment>
<comment type="induction">
    <text evidence="1">Accumulates according to a robust circadian rhythm.</text>
</comment>
<comment type="disease">
    <text>A chromosomal aberration involving HLF is a cause of pre-B-cell acute lymphoblastic leukemia (B-ALL). Translocation t(17;19)(q22;p13.3) with TCF3.</text>
</comment>
<comment type="similarity">
    <text evidence="5">Belongs to the bZIP family. PAR subfamily.</text>
</comment>
<comment type="sequence caution" evidence="5">
    <conflict type="erroneous initiation">
        <sequence resource="EMBL-CDS" id="AAA58445"/>
    </conflict>
</comment>
<comment type="online information" name="Atlas of Genetics and Cytogenetics in Oncology and Haematology">
    <link uri="https://atlasgeneticsoncology.org/gene/47/HLF"/>
</comment>
<keyword id="KW-0025">Alternative splicing</keyword>
<keyword id="KW-0090">Biological rhythms</keyword>
<keyword id="KW-0160">Chromosomal rearrangement</keyword>
<keyword id="KW-0238">DNA-binding</keyword>
<keyword id="KW-0539">Nucleus</keyword>
<keyword id="KW-1267">Proteomics identification</keyword>
<keyword id="KW-0656">Proto-oncogene</keyword>
<keyword id="KW-1185">Reference proteome</keyword>
<keyword id="KW-0804">Transcription</keyword>
<keyword id="KW-0805">Transcription regulation</keyword>
<gene>
    <name type="primary">HLF</name>
</gene>
<evidence type="ECO:0000250" key="1"/>
<evidence type="ECO:0000255" key="2">
    <source>
        <dbReference type="PROSITE-ProRule" id="PRU00978"/>
    </source>
</evidence>
<evidence type="ECO:0000256" key="3">
    <source>
        <dbReference type="SAM" id="MobiDB-lite"/>
    </source>
</evidence>
<evidence type="ECO:0000303" key="4">
    <source>
    </source>
</evidence>
<evidence type="ECO:0000305" key="5"/>
<feature type="chain" id="PRO_0000076510" description="Hepatic leukemia factor">
    <location>
        <begin position="1"/>
        <end position="295"/>
    </location>
</feature>
<feature type="domain" description="bZIP" evidence="2">
    <location>
        <begin position="225"/>
        <end position="288"/>
    </location>
</feature>
<feature type="region of interest" description="Disordered" evidence="3">
    <location>
        <begin position="37"/>
        <end position="70"/>
    </location>
</feature>
<feature type="region of interest" description="Disordered" evidence="3">
    <location>
        <begin position="93"/>
        <end position="167"/>
    </location>
</feature>
<feature type="region of interest" description="Basic motif" evidence="2">
    <location>
        <begin position="227"/>
        <end position="247"/>
    </location>
</feature>
<feature type="region of interest" description="Leucine-zipper" evidence="2">
    <location>
        <begin position="248"/>
        <end position="255"/>
    </location>
</feature>
<feature type="compositionally biased region" description="Basic and acidic residues" evidence="3">
    <location>
        <begin position="37"/>
        <end position="52"/>
    </location>
</feature>
<feature type="splice variant" id="VSP_053852" description="In isoform 2." evidence="4">
    <location>
        <begin position="1"/>
        <end position="85"/>
    </location>
</feature>
<feature type="sequence variant" id="VAR_008515" description="In fusion protein; decreases DNA-binding activity.">
    <original>I</original>
    <variation>F</variation>
    <location>
        <position position="253"/>
    </location>
</feature>
<reference key="1">
    <citation type="journal article" date="1992" name="Genes Dev.">
        <title>Hlf, a novel hepatic bZIP protein, shows altered DNA-binding properties following fusion to E2A in t(17;19) acute lymphoblastic leukemia.</title>
        <authorList>
            <person name="Hunger S.P."/>
            <person name="Ohyashiki K."/>
            <person name="Toyama K."/>
            <person name="Cleary M.L."/>
        </authorList>
    </citation>
    <scope>NUCLEOTIDE SEQUENCE [MRNA] (ISOFORM 1)</scope>
    <scope>CHROMOSOMAL TRANSLOCATION WITH TCF3</scope>
    <source>
        <tissue>Hepatoma</tissue>
    </source>
</reference>
<reference key="2">
    <citation type="journal article" date="1992" name="Science">
        <title>Fusion of the leucine zipper gene HLF to the E2A gene in human acute B-lineage leukemia.</title>
        <authorList>
            <person name="Inaba T."/>
            <person name="Roberts W.M."/>
            <person name="Shapiro L.H."/>
            <person name="Jolly K.W."/>
            <person name="Raimondi S.C."/>
            <person name="Smith S.D."/>
            <person name="Look A.T."/>
        </authorList>
    </citation>
    <scope>NUCLEOTIDE SEQUENCE [MRNA] (ISOFORM 1)</scope>
    <scope>CHROMOSOMAL TRANSLOCATION WITH TCF3</scope>
    <source>
        <tissue>Hepatoma</tissue>
    </source>
</reference>
<reference key="3">
    <citation type="journal article" date="2004" name="Nat. Genet.">
        <title>Complete sequencing and characterization of 21,243 full-length human cDNAs.</title>
        <authorList>
            <person name="Ota T."/>
            <person name="Suzuki Y."/>
            <person name="Nishikawa T."/>
            <person name="Otsuki T."/>
            <person name="Sugiyama T."/>
            <person name="Irie R."/>
            <person name="Wakamatsu A."/>
            <person name="Hayashi K."/>
            <person name="Sato H."/>
            <person name="Nagai K."/>
            <person name="Kimura K."/>
            <person name="Makita H."/>
            <person name="Sekine M."/>
            <person name="Obayashi M."/>
            <person name="Nishi T."/>
            <person name="Shibahara T."/>
            <person name="Tanaka T."/>
            <person name="Ishii S."/>
            <person name="Yamamoto J."/>
            <person name="Saito K."/>
            <person name="Kawai Y."/>
            <person name="Isono Y."/>
            <person name="Nakamura Y."/>
            <person name="Nagahari K."/>
            <person name="Murakami K."/>
            <person name="Yasuda T."/>
            <person name="Iwayanagi T."/>
            <person name="Wagatsuma M."/>
            <person name="Shiratori A."/>
            <person name="Sudo H."/>
            <person name="Hosoiri T."/>
            <person name="Kaku Y."/>
            <person name="Kodaira H."/>
            <person name="Kondo H."/>
            <person name="Sugawara M."/>
            <person name="Takahashi M."/>
            <person name="Kanda K."/>
            <person name="Yokoi T."/>
            <person name="Furuya T."/>
            <person name="Kikkawa E."/>
            <person name="Omura Y."/>
            <person name="Abe K."/>
            <person name="Kamihara K."/>
            <person name="Katsuta N."/>
            <person name="Sato K."/>
            <person name="Tanikawa M."/>
            <person name="Yamazaki M."/>
            <person name="Ninomiya K."/>
            <person name="Ishibashi T."/>
            <person name="Yamashita H."/>
            <person name="Murakawa K."/>
            <person name="Fujimori K."/>
            <person name="Tanai H."/>
            <person name="Kimata M."/>
            <person name="Watanabe M."/>
            <person name="Hiraoka S."/>
            <person name="Chiba Y."/>
            <person name="Ishida S."/>
            <person name="Ono Y."/>
            <person name="Takiguchi S."/>
            <person name="Watanabe S."/>
            <person name="Yosida M."/>
            <person name="Hotuta T."/>
            <person name="Kusano J."/>
            <person name="Kanehori K."/>
            <person name="Takahashi-Fujii A."/>
            <person name="Hara H."/>
            <person name="Tanase T.-O."/>
            <person name="Nomura Y."/>
            <person name="Togiya S."/>
            <person name="Komai F."/>
            <person name="Hara R."/>
            <person name="Takeuchi K."/>
            <person name="Arita M."/>
            <person name="Imose N."/>
            <person name="Musashino K."/>
            <person name="Yuuki H."/>
            <person name="Oshima A."/>
            <person name="Sasaki N."/>
            <person name="Aotsuka S."/>
            <person name="Yoshikawa Y."/>
            <person name="Matsunawa H."/>
            <person name="Ichihara T."/>
            <person name="Shiohata N."/>
            <person name="Sano S."/>
            <person name="Moriya S."/>
            <person name="Momiyama H."/>
            <person name="Satoh N."/>
            <person name="Takami S."/>
            <person name="Terashima Y."/>
            <person name="Suzuki O."/>
            <person name="Nakagawa S."/>
            <person name="Senoh A."/>
            <person name="Mizoguchi H."/>
            <person name="Goto Y."/>
            <person name="Shimizu F."/>
            <person name="Wakebe H."/>
            <person name="Hishigaki H."/>
            <person name="Watanabe T."/>
            <person name="Sugiyama A."/>
            <person name="Takemoto M."/>
            <person name="Kawakami B."/>
            <person name="Yamazaki M."/>
            <person name="Watanabe K."/>
            <person name="Kumagai A."/>
            <person name="Itakura S."/>
            <person name="Fukuzumi Y."/>
            <person name="Fujimori Y."/>
            <person name="Komiyama M."/>
            <person name="Tashiro H."/>
            <person name="Tanigami A."/>
            <person name="Fujiwara T."/>
            <person name="Ono T."/>
            <person name="Yamada K."/>
            <person name="Fujii Y."/>
            <person name="Ozaki K."/>
            <person name="Hirao M."/>
            <person name="Ohmori Y."/>
            <person name="Kawabata A."/>
            <person name="Hikiji T."/>
            <person name="Kobatake N."/>
            <person name="Inagaki H."/>
            <person name="Ikema Y."/>
            <person name="Okamoto S."/>
            <person name="Okitani R."/>
            <person name="Kawakami T."/>
            <person name="Noguchi S."/>
            <person name="Itoh T."/>
            <person name="Shigeta K."/>
            <person name="Senba T."/>
            <person name="Matsumura K."/>
            <person name="Nakajima Y."/>
            <person name="Mizuno T."/>
            <person name="Morinaga M."/>
            <person name="Sasaki M."/>
            <person name="Togashi T."/>
            <person name="Oyama M."/>
            <person name="Hata H."/>
            <person name="Watanabe M."/>
            <person name="Komatsu T."/>
            <person name="Mizushima-Sugano J."/>
            <person name="Satoh T."/>
            <person name="Shirai Y."/>
            <person name="Takahashi Y."/>
            <person name="Nakagawa K."/>
            <person name="Okumura K."/>
            <person name="Nagase T."/>
            <person name="Nomura N."/>
            <person name="Kikuchi H."/>
            <person name="Masuho Y."/>
            <person name="Yamashita R."/>
            <person name="Nakai K."/>
            <person name="Yada T."/>
            <person name="Nakamura Y."/>
            <person name="Ohara O."/>
            <person name="Isogai T."/>
            <person name="Sugano S."/>
        </authorList>
    </citation>
    <scope>NUCLEOTIDE SEQUENCE [LARGE SCALE MRNA] (ISOFORMS 1 AND 2)</scope>
    <source>
        <tissue>Hippocampus</tissue>
        <tissue>Testis</tissue>
    </source>
</reference>
<reference key="4">
    <citation type="submission" date="2004-06" db="EMBL/GenBank/DDBJ databases">
        <title>Cloning of human full open reading frames in Gateway(TM) system entry vector (pDONR201).</title>
        <authorList>
            <person name="Ebert L."/>
            <person name="Schick M."/>
            <person name="Neubert P."/>
            <person name="Schatten R."/>
            <person name="Henze S."/>
            <person name="Korn B."/>
        </authorList>
    </citation>
    <scope>NUCLEOTIDE SEQUENCE [LARGE SCALE MRNA] (ISOFORM 1)</scope>
</reference>
<reference key="5">
    <citation type="journal article" date="2006" name="Nature">
        <title>DNA sequence of human chromosome 17 and analysis of rearrangement in the human lineage.</title>
        <authorList>
            <person name="Zody M.C."/>
            <person name="Garber M."/>
            <person name="Adams D.J."/>
            <person name="Sharpe T."/>
            <person name="Harrow J."/>
            <person name="Lupski J.R."/>
            <person name="Nicholson C."/>
            <person name="Searle S.M."/>
            <person name="Wilming L."/>
            <person name="Young S.K."/>
            <person name="Abouelleil A."/>
            <person name="Allen N.R."/>
            <person name="Bi W."/>
            <person name="Bloom T."/>
            <person name="Borowsky M.L."/>
            <person name="Bugalter B.E."/>
            <person name="Butler J."/>
            <person name="Chang J.L."/>
            <person name="Chen C.-K."/>
            <person name="Cook A."/>
            <person name="Corum B."/>
            <person name="Cuomo C.A."/>
            <person name="de Jong P.J."/>
            <person name="DeCaprio D."/>
            <person name="Dewar K."/>
            <person name="FitzGerald M."/>
            <person name="Gilbert J."/>
            <person name="Gibson R."/>
            <person name="Gnerre S."/>
            <person name="Goldstein S."/>
            <person name="Grafham D.V."/>
            <person name="Grocock R."/>
            <person name="Hafez N."/>
            <person name="Hagopian D.S."/>
            <person name="Hart E."/>
            <person name="Norman C.H."/>
            <person name="Humphray S."/>
            <person name="Jaffe D.B."/>
            <person name="Jones M."/>
            <person name="Kamal M."/>
            <person name="Khodiyar V.K."/>
            <person name="LaButti K."/>
            <person name="Laird G."/>
            <person name="Lehoczky J."/>
            <person name="Liu X."/>
            <person name="Lokyitsang T."/>
            <person name="Loveland J."/>
            <person name="Lui A."/>
            <person name="Macdonald P."/>
            <person name="Major J.E."/>
            <person name="Matthews L."/>
            <person name="Mauceli E."/>
            <person name="McCarroll S.A."/>
            <person name="Mihalev A.H."/>
            <person name="Mudge J."/>
            <person name="Nguyen C."/>
            <person name="Nicol R."/>
            <person name="O'Leary S.B."/>
            <person name="Osoegawa K."/>
            <person name="Schwartz D.C."/>
            <person name="Shaw-Smith C."/>
            <person name="Stankiewicz P."/>
            <person name="Steward C."/>
            <person name="Swarbreck D."/>
            <person name="Venkataraman V."/>
            <person name="Whittaker C.A."/>
            <person name="Yang X."/>
            <person name="Zimmer A.R."/>
            <person name="Bradley A."/>
            <person name="Hubbard T."/>
            <person name="Birren B.W."/>
            <person name="Rogers J."/>
            <person name="Lander E.S."/>
            <person name="Nusbaum C."/>
        </authorList>
    </citation>
    <scope>NUCLEOTIDE SEQUENCE [LARGE SCALE GENOMIC DNA]</scope>
</reference>
<reference key="6">
    <citation type="submission" date="2005-09" db="EMBL/GenBank/DDBJ databases">
        <authorList>
            <person name="Mural R.J."/>
            <person name="Istrail S."/>
            <person name="Sutton G."/>
            <person name="Florea L."/>
            <person name="Halpern A.L."/>
            <person name="Mobarry C.M."/>
            <person name="Lippert R."/>
            <person name="Walenz B."/>
            <person name="Shatkay H."/>
            <person name="Dew I."/>
            <person name="Miller J.R."/>
            <person name="Flanigan M.J."/>
            <person name="Edwards N.J."/>
            <person name="Bolanos R."/>
            <person name="Fasulo D."/>
            <person name="Halldorsson B.V."/>
            <person name="Hannenhalli S."/>
            <person name="Turner R."/>
            <person name="Yooseph S."/>
            <person name="Lu F."/>
            <person name="Nusskern D.R."/>
            <person name="Shue B.C."/>
            <person name="Zheng X.H."/>
            <person name="Zhong F."/>
            <person name="Delcher A.L."/>
            <person name="Huson D.H."/>
            <person name="Kravitz S.A."/>
            <person name="Mouchard L."/>
            <person name="Reinert K."/>
            <person name="Remington K.A."/>
            <person name="Clark A.G."/>
            <person name="Waterman M.S."/>
            <person name="Eichler E.E."/>
            <person name="Adams M.D."/>
            <person name="Hunkapiller M.W."/>
            <person name="Myers E.W."/>
            <person name="Venter J.C."/>
        </authorList>
    </citation>
    <scope>NUCLEOTIDE SEQUENCE [LARGE SCALE GENOMIC DNA]</scope>
</reference>
<reference key="7">
    <citation type="journal article" date="2004" name="Genome Res.">
        <title>The status, quality, and expansion of the NIH full-length cDNA project: the Mammalian Gene Collection (MGC).</title>
        <authorList>
            <consortium name="The MGC Project Team"/>
        </authorList>
    </citation>
    <scope>NUCLEOTIDE SEQUENCE [LARGE SCALE MRNA] (ISOFORM 1)</scope>
    <source>
        <tissue>Brain</tissue>
    </source>
</reference>
<protein>
    <recommendedName>
        <fullName>Hepatic leukemia factor</fullName>
    </recommendedName>
</protein>
<proteinExistence type="evidence at protein level"/>
<name>HLF_HUMAN</name>
<sequence length="295" mass="33199">MEKMSRPLPLNPTFIPPPYGVLRSLLENPLKLPLHHEDAFSKDKDKEKKLDDESNSPTVPQSAFLGPTLWDKTLPYDGDTFQLEYMDLEEFLSENGIPPSPSQHDHSPHPPGLQPASSAAPSVMDLSSRASAPLHPGIPSPNCMQSPIRPGQLLPANRNTPSPIDPDTIQVPVGYEPDPADLALSSIPGQEMFDPRKRKFSEEELKPQPMIKKARKVFIPDDLKDDKYWARRRKNNMAAKRSRDARRLKENQIAIRASFLEKENSALRQEVADLRKELGKCKNILAKYEARHGPL</sequence>
<accession>Q16534</accession>
<accession>A8K1X8</accession>
<accession>Q6FHS9</accession>
<organism>
    <name type="scientific">Homo sapiens</name>
    <name type="common">Human</name>
    <dbReference type="NCBI Taxonomy" id="9606"/>
    <lineage>
        <taxon>Eukaryota</taxon>
        <taxon>Metazoa</taxon>
        <taxon>Chordata</taxon>
        <taxon>Craniata</taxon>
        <taxon>Vertebrata</taxon>
        <taxon>Euteleostomi</taxon>
        <taxon>Mammalia</taxon>
        <taxon>Eutheria</taxon>
        <taxon>Euarchontoglires</taxon>
        <taxon>Primates</taxon>
        <taxon>Haplorrhini</taxon>
        <taxon>Catarrhini</taxon>
        <taxon>Hominidae</taxon>
        <taxon>Homo</taxon>
    </lineage>
</organism>
<dbReference type="EMBL" id="M95585">
    <property type="protein sequence ID" value="AAA52675.1"/>
    <property type="molecule type" value="mRNA"/>
</dbReference>
<dbReference type="EMBL" id="M95586">
    <property type="protein sequence ID" value="AAA58445.1"/>
    <property type="status" value="ALT_INIT"/>
    <property type="molecule type" value="mRNA"/>
</dbReference>
<dbReference type="EMBL" id="X68985">
    <property type="protein sequence ID" value="CAA48777.1"/>
    <property type="molecule type" value="mRNA"/>
</dbReference>
<dbReference type="EMBL" id="AK290043">
    <property type="protein sequence ID" value="BAF82732.1"/>
    <property type="molecule type" value="mRNA"/>
</dbReference>
<dbReference type="EMBL" id="AK315079">
    <property type="protein sequence ID" value="BAG37547.1"/>
    <property type="molecule type" value="mRNA"/>
</dbReference>
<dbReference type="EMBL" id="CR541672">
    <property type="protein sequence ID" value="CAG46473.1"/>
    <property type="molecule type" value="mRNA"/>
</dbReference>
<dbReference type="EMBL" id="AC007638">
    <property type="status" value="NOT_ANNOTATED_CDS"/>
    <property type="molecule type" value="Genomic_DNA"/>
</dbReference>
<dbReference type="EMBL" id="CH471109">
    <property type="protein sequence ID" value="EAW94544.1"/>
    <property type="molecule type" value="Genomic_DNA"/>
</dbReference>
<dbReference type="EMBL" id="BC036093">
    <property type="protein sequence ID" value="AAH36093.1"/>
    <property type="molecule type" value="mRNA"/>
</dbReference>
<dbReference type="CCDS" id="CCDS11585.1">
    <molecule id="Q16534-1"/>
</dbReference>
<dbReference type="CCDS" id="CCDS82164.1">
    <molecule id="Q16534-2"/>
</dbReference>
<dbReference type="PIR" id="A44064">
    <property type="entry name" value="A44064"/>
</dbReference>
<dbReference type="RefSeq" id="NP_001317304.1">
    <molecule id="Q16534-2"/>
    <property type="nucleotide sequence ID" value="NM_001330375.2"/>
</dbReference>
<dbReference type="RefSeq" id="NP_002117.1">
    <molecule id="Q16534-1"/>
    <property type="nucleotide sequence ID" value="NM_002126.5"/>
</dbReference>
<dbReference type="SMR" id="Q16534"/>
<dbReference type="BioGRID" id="109376">
    <property type="interactions" value="10"/>
</dbReference>
<dbReference type="ComplexPortal" id="CPX-7011">
    <property type="entry name" value="bZIP transcription factor complex, BATF-HLF"/>
</dbReference>
<dbReference type="ComplexPortal" id="CPX-7081">
    <property type="entry name" value="bZIP transcription factor complex, BATF2-HLF"/>
</dbReference>
<dbReference type="ComplexPortal" id="CPX-7107">
    <property type="entry name" value="bZIP transcription factor complex, BATF3-HLF"/>
</dbReference>
<dbReference type="CORUM" id="Q16534"/>
<dbReference type="FunCoup" id="Q16534">
    <property type="interactions" value="5697"/>
</dbReference>
<dbReference type="IntAct" id="Q16534">
    <property type="interactions" value="34"/>
</dbReference>
<dbReference type="STRING" id="9606.ENSP00000226067"/>
<dbReference type="GlyGen" id="Q16534">
    <property type="glycosylation" value="1 site"/>
</dbReference>
<dbReference type="iPTMnet" id="Q16534"/>
<dbReference type="PhosphoSitePlus" id="Q16534"/>
<dbReference type="BioMuta" id="HLF"/>
<dbReference type="DMDM" id="6919907"/>
<dbReference type="MassIVE" id="Q16534"/>
<dbReference type="PaxDb" id="9606-ENSP00000226067"/>
<dbReference type="PeptideAtlas" id="Q16534"/>
<dbReference type="ProteomicsDB" id="1850"/>
<dbReference type="ProteomicsDB" id="60897">
    <molecule id="Q16534-1"/>
</dbReference>
<dbReference type="Antibodypedia" id="30848">
    <property type="antibodies" value="183 antibodies from 27 providers"/>
</dbReference>
<dbReference type="DNASU" id="3131"/>
<dbReference type="Ensembl" id="ENST00000226067.10">
    <molecule id="Q16534-1"/>
    <property type="protein sequence ID" value="ENSP00000226067.5"/>
    <property type="gene ID" value="ENSG00000108924.14"/>
</dbReference>
<dbReference type="Ensembl" id="ENST00000430986.6">
    <molecule id="Q16534-2"/>
    <property type="protein sequence ID" value="ENSP00000402496.2"/>
    <property type="gene ID" value="ENSG00000108924.14"/>
</dbReference>
<dbReference type="Ensembl" id="ENST00000573945.5">
    <molecule id="Q16534-2"/>
    <property type="protein sequence ID" value="ENSP00000460296.1"/>
    <property type="gene ID" value="ENSG00000108924.14"/>
</dbReference>
<dbReference type="Ensembl" id="ENST00000575345.5">
    <molecule id="Q16534-2"/>
    <property type="protein sequence ID" value="ENSP00000460572.1"/>
    <property type="gene ID" value="ENSG00000108924.14"/>
</dbReference>
<dbReference type="GeneID" id="3131"/>
<dbReference type="KEGG" id="hsa:3131"/>
<dbReference type="MANE-Select" id="ENST00000226067.10">
    <property type="protein sequence ID" value="ENSP00000226067.5"/>
    <property type="RefSeq nucleotide sequence ID" value="NM_002126.5"/>
    <property type="RefSeq protein sequence ID" value="NP_002117.1"/>
</dbReference>
<dbReference type="UCSC" id="uc002iug.2">
    <molecule id="Q16534-1"/>
    <property type="organism name" value="human"/>
</dbReference>
<dbReference type="AGR" id="HGNC:4977"/>
<dbReference type="CTD" id="3131"/>
<dbReference type="DisGeNET" id="3131"/>
<dbReference type="GeneCards" id="HLF"/>
<dbReference type="HGNC" id="HGNC:4977">
    <property type="gene designation" value="HLF"/>
</dbReference>
<dbReference type="HPA" id="ENSG00000108924">
    <property type="expression patterns" value="Tissue enhanced (liver)"/>
</dbReference>
<dbReference type="MalaCards" id="HLF"/>
<dbReference type="MIM" id="142385">
    <property type="type" value="gene"/>
</dbReference>
<dbReference type="neXtProt" id="NX_Q16534"/>
<dbReference type="OpenTargets" id="ENSG00000108924"/>
<dbReference type="Orphanet" id="641375">
    <property type="disease" value="B-lymphoblastic leukemia/lymphoma with t(17;19)"/>
</dbReference>
<dbReference type="PharmGKB" id="PA29311"/>
<dbReference type="VEuPathDB" id="HostDB:ENSG00000108924"/>
<dbReference type="eggNOG" id="KOG3119">
    <property type="taxonomic scope" value="Eukaryota"/>
</dbReference>
<dbReference type="GeneTree" id="ENSGT00940000156555"/>
<dbReference type="InParanoid" id="Q16534"/>
<dbReference type="OMA" id="YDADNFQ"/>
<dbReference type="OrthoDB" id="6022300at2759"/>
<dbReference type="PAN-GO" id="Q16534">
    <property type="GO annotations" value="4 GO annotations based on evolutionary models"/>
</dbReference>
<dbReference type="PhylomeDB" id="Q16534"/>
<dbReference type="TreeFam" id="TF315869"/>
<dbReference type="PathwayCommons" id="Q16534"/>
<dbReference type="SignaLink" id="Q16534"/>
<dbReference type="SIGNOR" id="Q16534"/>
<dbReference type="BioGRID-ORCS" id="3131">
    <property type="hits" value="11 hits in 1166 CRISPR screens"/>
</dbReference>
<dbReference type="ChiTaRS" id="HLF">
    <property type="organism name" value="human"/>
</dbReference>
<dbReference type="GeneWiki" id="HLF_(gene)"/>
<dbReference type="GenomeRNAi" id="3131"/>
<dbReference type="Pharos" id="Q16534">
    <property type="development level" value="Tbio"/>
</dbReference>
<dbReference type="PRO" id="PR:Q16534"/>
<dbReference type="Proteomes" id="UP000005640">
    <property type="component" value="Chromosome 17"/>
</dbReference>
<dbReference type="RNAct" id="Q16534">
    <property type="molecule type" value="protein"/>
</dbReference>
<dbReference type="Bgee" id="ENSG00000108924">
    <property type="expression patterns" value="Expressed in calcaneal tendon and 198 other cell types or tissues"/>
</dbReference>
<dbReference type="ExpressionAtlas" id="Q16534">
    <property type="expression patterns" value="baseline and differential"/>
</dbReference>
<dbReference type="GO" id="GO:0000785">
    <property type="term" value="C:chromatin"/>
    <property type="evidence" value="ECO:0000247"/>
    <property type="project" value="NTNU_SB"/>
</dbReference>
<dbReference type="GO" id="GO:0005654">
    <property type="term" value="C:nucleoplasm"/>
    <property type="evidence" value="ECO:0000314"/>
    <property type="project" value="HPA"/>
</dbReference>
<dbReference type="GO" id="GO:0005634">
    <property type="term" value="C:nucleus"/>
    <property type="evidence" value="ECO:0000318"/>
    <property type="project" value="GO_Central"/>
</dbReference>
<dbReference type="GO" id="GO:0090575">
    <property type="term" value="C:RNA polymerase II transcription regulator complex"/>
    <property type="evidence" value="ECO:0000353"/>
    <property type="project" value="ComplexPortal"/>
</dbReference>
<dbReference type="GO" id="GO:0003677">
    <property type="term" value="F:DNA binding"/>
    <property type="evidence" value="ECO:0000304"/>
    <property type="project" value="ProtInc"/>
</dbReference>
<dbReference type="GO" id="GO:0001228">
    <property type="term" value="F:DNA-binding transcription activator activity, RNA polymerase II-specific"/>
    <property type="evidence" value="ECO:0000314"/>
    <property type="project" value="NTNU_SB"/>
</dbReference>
<dbReference type="GO" id="GO:0000981">
    <property type="term" value="F:DNA-binding transcription factor activity, RNA polymerase II-specific"/>
    <property type="evidence" value="ECO:0000247"/>
    <property type="project" value="NTNU_SB"/>
</dbReference>
<dbReference type="GO" id="GO:0003690">
    <property type="term" value="F:double-stranded DNA binding"/>
    <property type="evidence" value="ECO:0000304"/>
    <property type="project" value="ProtInc"/>
</dbReference>
<dbReference type="GO" id="GO:0000978">
    <property type="term" value="F:RNA polymerase II cis-regulatory region sequence-specific DNA binding"/>
    <property type="evidence" value="ECO:0000318"/>
    <property type="project" value="GO_Central"/>
</dbReference>
<dbReference type="GO" id="GO:0043565">
    <property type="term" value="F:sequence-specific DNA binding"/>
    <property type="evidence" value="ECO:0000315"/>
    <property type="project" value="NTNU_SB"/>
</dbReference>
<dbReference type="GO" id="GO:1990837">
    <property type="term" value="F:sequence-specific double-stranded DNA binding"/>
    <property type="evidence" value="ECO:0000314"/>
    <property type="project" value="ARUK-UCL"/>
</dbReference>
<dbReference type="GO" id="GO:0045944">
    <property type="term" value="P:positive regulation of transcription by RNA polymerase II"/>
    <property type="evidence" value="ECO:0000314"/>
    <property type="project" value="NTNU_SB"/>
</dbReference>
<dbReference type="GO" id="GO:0006357">
    <property type="term" value="P:regulation of transcription by RNA polymerase II"/>
    <property type="evidence" value="ECO:0000318"/>
    <property type="project" value="GO_Central"/>
</dbReference>
<dbReference type="GO" id="GO:0048511">
    <property type="term" value="P:rhythmic process"/>
    <property type="evidence" value="ECO:0007669"/>
    <property type="project" value="UniProtKB-KW"/>
</dbReference>
<dbReference type="GO" id="GO:0035914">
    <property type="term" value="P:skeletal muscle cell differentiation"/>
    <property type="evidence" value="ECO:0007669"/>
    <property type="project" value="Ensembl"/>
</dbReference>
<dbReference type="CDD" id="cd14695">
    <property type="entry name" value="bZIP_HLF"/>
    <property type="match status" value="1"/>
</dbReference>
<dbReference type="FunFam" id="1.20.5.170:FF:000007">
    <property type="entry name" value="hepatic leukemia factor isoform X2"/>
    <property type="match status" value="1"/>
</dbReference>
<dbReference type="Gene3D" id="1.20.5.170">
    <property type="match status" value="1"/>
</dbReference>
<dbReference type="InterPro" id="IPR004827">
    <property type="entry name" value="bZIP"/>
</dbReference>
<dbReference type="InterPro" id="IPR046347">
    <property type="entry name" value="bZIP_sf"/>
</dbReference>
<dbReference type="InterPro" id="IPR040223">
    <property type="entry name" value="PAR_bZIP"/>
</dbReference>
<dbReference type="PANTHER" id="PTHR11988:SF28">
    <property type="entry name" value="HEPATIC LEUKEMIA FACTOR"/>
    <property type="match status" value="1"/>
</dbReference>
<dbReference type="PANTHER" id="PTHR11988">
    <property type="entry name" value="THYROTROPH EMBRYONIC FACTOR RELATED"/>
    <property type="match status" value="1"/>
</dbReference>
<dbReference type="Pfam" id="PF07716">
    <property type="entry name" value="bZIP_2"/>
    <property type="match status" value="1"/>
</dbReference>
<dbReference type="SMART" id="SM00338">
    <property type="entry name" value="BRLZ"/>
    <property type="match status" value="1"/>
</dbReference>
<dbReference type="SUPFAM" id="SSF57959">
    <property type="entry name" value="Leucine zipper domain"/>
    <property type="match status" value="1"/>
</dbReference>
<dbReference type="PROSITE" id="PS50217">
    <property type="entry name" value="BZIP"/>
    <property type="match status" value="1"/>
</dbReference>